<organism>
    <name type="scientific">Caenorhabditis elegans</name>
    <dbReference type="NCBI Taxonomy" id="6239"/>
    <lineage>
        <taxon>Eukaryota</taxon>
        <taxon>Metazoa</taxon>
        <taxon>Ecdysozoa</taxon>
        <taxon>Nematoda</taxon>
        <taxon>Chromadorea</taxon>
        <taxon>Rhabditida</taxon>
        <taxon>Rhabditina</taxon>
        <taxon>Rhabditomorpha</taxon>
        <taxon>Rhabditoidea</taxon>
        <taxon>Rhabditidae</taxon>
        <taxon>Peloderinae</taxon>
        <taxon>Caenorhabditis</taxon>
    </lineage>
</organism>
<proteinExistence type="evidence at protein level"/>
<keyword id="KW-0025">Alternative splicing</keyword>
<keyword id="KW-1003">Cell membrane</keyword>
<keyword id="KW-0325">Glycoprotein</keyword>
<keyword id="KW-0472">Membrane</keyword>
<keyword id="KW-1185">Reference proteome</keyword>
<keyword id="KW-0812">Transmembrane</keyword>
<keyword id="KW-1133">Transmembrane helix</keyword>
<keyword id="KW-0813">Transport</keyword>
<comment type="function">
    <text evidence="2 3">Heme transporter that mediates heme uptake across the plasma membrane.</text>
</comment>
<comment type="subcellular location">
    <subcellularLocation>
        <location evidence="4">Cell membrane</location>
        <topology evidence="4">Multi-pass membrane protein</topology>
    </subcellularLocation>
</comment>
<comment type="alternative products">
    <event type="alternative splicing"/>
    <isoform>
        <id>Q20106-3</id>
        <name evidence="6">c</name>
        <sequence type="displayed"/>
    </isoform>
    <isoform>
        <id>Q20106-2</id>
        <name evidence="5">b</name>
        <sequence type="described" ref="VSP_058209"/>
    </isoform>
</comment>
<comment type="induction">
    <text evidence="2">By heme deficiency.</text>
</comment>
<comment type="disruption phenotype">
    <text evidence="3">RNAi-mediated knockdown results in the heme accumulation in the intestine under low heme conditions (PubMed:28581477). Simultaneous RNAi-mediated knockdown with hrg-7 results in defective heme deficiency sensing (PubMed:28581477).</text>
</comment>
<comment type="similarity">
    <text evidence="4">Belongs to the HRG family.</text>
</comment>
<evidence type="ECO:0000255" key="1"/>
<evidence type="ECO:0000269" key="2">
    <source>
    </source>
</evidence>
<evidence type="ECO:0000269" key="3">
    <source>
    </source>
</evidence>
<evidence type="ECO:0000305" key="4"/>
<evidence type="ECO:0000312" key="5">
    <source>
        <dbReference type="WormBase" id="F36H1.5b"/>
    </source>
</evidence>
<evidence type="ECO:0000312" key="6">
    <source>
        <dbReference type="WormBase" id="F36H1.5c"/>
    </source>
</evidence>
<feature type="chain" id="PRO_0000348584" description="Heme transporter hrg-4">
    <location>
        <begin position="1"/>
        <end position="184"/>
    </location>
</feature>
<feature type="transmembrane region" description="Helical" evidence="1">
    <location>
        <begin position="19"/>
        <end position="39"/>
    </location>
</feature>
<feature type="transmembrane region" description="Helical" evidence="1">
    <location>
        <begin position="46"/>
        <end position="66"/>
    </location>
</feature>
<feature type="transmembrane region" description="Helical" evidence="1">
    <location>
        <begin position="87"/>
        <end position="107"/>
    </location>
</feature>
<feature type="transmembrane region" description="Helical" evidence="1">
    <location>
        <begin position="124"/>
        <end position="146"/>
    </location>
</feature>
<feature type="glycosylation site" description="N-linked (GlcNAc...) asparagine" evidence="1">
    <location>
        <position position="42"/>
    </location>
</feature>
<feature type="splice variant" id="VSP_058209" description="In isoform b." evidence="4">
    <location>
        <begin position="116"/>
        <end position="130"/>
    </location>
</feature>
<gene>
    <name evidence="6" type="primary">hrg-4</name>
    <name evidence="6" type="ORF">F36H1.5</name>
</gene>
<sequence>MTAENRGFCQLICHINVRIGWTIFGIVFGISAILTYAIKFHNWSATATTAIATLFACETLYLYWALKKNTIVNWKSSTFQLMIWPNVFIGLLGLLGCLVCYIIAGITHQGAGSIQGWSLFKCSIYFSKFAAMYGENLWFTGSWSLVITKWTWQNAFFARKYLNKIGTASEDGDIDDDDVEVIKS</sequence>
<protein>
    <recommendedName>
        <fullName>Heme transporter hrg-4</fullName>
    </recommendedName>
    <alternativeName>
        <fullName>Heme-responsive gene 4 protein</fullName>
        <shortName>CeHRG-4</shortName>
    </alternativeName>
</protein>
<accession>Q20106</accession>
<accession>A0A061AD77</accession>
<accession>B3GWC4</accession>
<dbReference type="EMBL" id="BX284604">
    <property type="protein sequence ID" value="CAQ58110.1"/>
    <property type="molecule type" value="Genomic_DNA"/>
</dbReference>
<dbReference type="EMBL" id="BX284604">
    <property type="protein sequence ID" value="CDR32813.1"/>
    <property type="molecule type" value="Genomic_DNA"/>
</dbReference>
<dbReference type="PIR" id="T21881">
    <property type="entry name" value="T21881"/>
</dbReference>
<dbReference type="RefSeq" id="NP_001129857.1">
    <molecule id="Q20106-2"/>
    <property type="nucleotide sequence ID" value="NM_001136385.2"/>
</dbReference>
<dbReference type="RefSeq" id="NP_001294019.1">
    <molecule id="Q20106-3"/>
    <property type="nucleotide sequence ID" value="NM_001307090.4"/>
</dbReference>
<dbReference type="FunCoup" id="Q20106">
    <property type="interactions" value="5"/>
</dbReference>
<dbReference type="STRING" id="6239.F36H1.5c.1"/>
<dbReference type="TCDB" id="2.A.110.1.3">
    <property type="family name" value="the heme transporter, heme-responsive gene protein (hrg) family"/>
</dbReference>
<dbReference type="GlyCosmos" id="Q20106">
    <property type="glycosylation" value="1 site, No reported glycans"/>
</dbReference>
<dbReference type="PaxDb" id="6239-F36H1.5a"/>
<dbReference type="EnsemblMetazoa" id="F36H1.5b.1">
    <molecule id="Q20106-2"/>
    <property type="protein sequence ID" value="F36H1.5b.1"/>
    <property type="gene ID" value="WBGene00009493"/>
</dbReference>
<dbReference type="EnsemblMetazoa" id="F36H1.5c.1">
    <molecule id="Q20106-3"/>
    <property type="protein sequence ID" value="F36H1.5c.1"/>
    <property type="gene ID" value="WBGene00009493"/>
</dbReference>
<dbReference type="GeneID" id="185380"/>
<dbReference type="KEGG" id="cel:CELE_F36H1.5"/>
<dbReference type="UCSC" id="F36H1.5">
    <molecule id="Q20106-3"/>
    <property type="organism name" value="c. elegans"/>
</dbReference>
<dbReference type="AGR" id="WB:WBGene00009493"/>
<dbReference type="CTD" id="185380"/>
<dbReference type="WormBase" id="F36H1.5b">
    <molecule id="Q20106-2"/>
    <property type="protein sequence ID" value="CE42667"/>
    <property type="gene ID" value="WBGene00009493"/>
    <property type="gene designation" value="hrg-4"/>
</dbReference>
<dbReference type="WormBase" id="F36H1.5c">
    <molecule id="Q20106-3"/>
    <property type="protein sequence ID" value="CE49968"/>
    <property type="gene ID" value="WBGene00009493"/>
    <property type="gene designation" value="hrg-4"/>
</dbReference>
<dbReference type="eggNOG" id="ENOG502TKK0">
    <property type="taxonomic scope" value="Eukaryota"/>
</dbReference>
<dbReference type="GeneTree" id="ENSGT00390000002307"/>
<dbReference type="HOGENOM" id="CLU_094341_0_0_1"/>
<dbReference type="InParanoid" id="Q20106"/>
<dbReference type="OMA" id="QNWSATA"/>
<dbReference type="OrthoDB" id="5807485at2759"/>
<dbReference type="PRO" id="PR:Q20106"/>
<dbReference type="Proteomes" id="UP000001940">
    <property type="component" value="Chromosome IV"/>
</dbReference>
<dbReference type="Bgee" id="WBGene00009493">
    <property type="expression patterns" value="Expressed in larva and 3 other cell types or tissues"/>
</dbReference>
<dbReference type="GO" id="GO:0005765">
    <property type="term" value="C:lysosomal membrane"/>
    <property type="evidence" value="ECO:0000318"/>
    <property type="project" value="GO_Central"/>
</dbReference>
<dbReference type="GO" id="GO:0005886">
    <property type="term" value="C:plasma membrane"/>
    <property type="evidence" value="ECO:0000314"/>
    <property type="project" value="WormBase"/>
</dbReference>
<dbReference type="GO" id="GO:0020037">
    <property type="term" value="F:heme binding"/>
    <property type="evidence" value="ECO:0000314"/>
    <property type="project" value="WormBase"/>
</dbReference>
<dbReference type="GO" id="GO:0015232">
    <property type="term" value="F:heme transmembrane transporter activity"/>
    <property type="evidence" value="ECO:0000314"/>
    <property type="project" value="WormBase"/>
</dbReference>
<dbReference type="GO" id="GO:0015886">
    <property type="term" value="P:heme transport"/>
    <property type="evidence" value="ECO:0000314"/>
    <property type="project" value="WormBase"/>
</dbReference>
<dbReference type="InterPro" id="IPR026218">
    <property type="entry name" value="HRG"/>
</dbReference>
<dbReference type="PANTHER" id="PTHR31525:SF3">
    <property type="entry name" value="HEME TRANSPORTER HRG-4"/>
    <property type="match status" value="1"/>
</dbReference>
<dbReference type="PANTHER" id="PTHR31525">
    <property type="entry name" value="HEME TRANSPORTER HRG1"/>
    <property type="match status" value="1"/>
</dbReference>
<dbReference type="Pfam" id="PF16954">
    <property type="entry name" value="HRG"/>
    <property type="match status" value="1"/>
</dbReference>
<dbReference type="PRINTS" id="PR02095">
    <property type="entry name" value="TRNSPORTRHRG"/>
</dbReference>
<reference key="1">
    <citation type="journal article" date="1998" name="Science">
        <title>Genome sequence of the nematode C. elegans: a platform for investigating biology.</title>
        <authorList>
            <consortium name="The C. elegans sequencing consortium"/>
        </authorList>
    </citation>
    <scope>NUCLEOTIDE SEQUENCE [LARGE SCALE GENOMIC DNA]</scope>
    <source>
        <strain>Bristol N2</strain>
    </source>
</reference>
<reference key="2">
    <citation type="journal article" date="2008" name="Nature">
        <title>Haem homeostasis is regulated by the conserved and concerted functions of HRG-1 proteins.</title>
        <authorList>
            <person name="Rajagopal A."/>
            <person name="Rao A.U."/>
            <person name="Amigo J."/>
            <person name="Tian M."/>
            <person name="Upadhyay S.K."/>
            <person name="Hall C."/>
            <person name="Uhm S."/>
            <person name="Mathew M.K."/>
            <person name="Fleming M.D."/>
            <person name="Paw B.H."/>
            <person name="Krause M."/>
            <person name="Hamza I."/>
        </authorList>
    </citation>
    <scope>FUNCTION</scope>
    <scope>SUBCELLULAR LOCATION</scope>
    <scope>HEME-BINDING</scope>
    <scope>INDUCTION</scope>
</reference>
<reference key="3">
    <citation type="journal article" date="2017" name="Nat. Cell Biol.">
        <title>Inter-organ signalling by HRG-7 promotes systemic haem homeostasis.</title>
        <authorList>
            <person name="Sinclair J."/>
            <person name="Pinter K."/>
            <person name="Samuel T."/>
            <person name="Beardsley S."/>
            <person name="Yuan X."/>
            <person name="Zhang J."/>
            <person name="Meng K."/>
            <person name="Yun S."/>
            <person name="Krause M."/>
            <person name="Hamza I."/>
        </authorList>
    </citation>
    <scope>FUNCTION</scope>
    <scope>DISRUPTION PHENOTYPE</scope>
</reference>
<name>HRG4_CAEEL</name>